<reference key="1">
    <citation type="journal article" date="2008" name="Genome Res.">
        <title>The genome of Pelotomaculum thermopropionicum reveals niche-associated evolution in anaerobic microbiota.</title>
        <authorList>
            <person name="Kosaka T."/>
            <person name="Kato S."/>
            <person name="Shimoyama T."/>
            <person name="Ishii S."/>
            <person name="Abe T."/>
            <person name="Watanabe K."/>
        </authorList>
    </citation>
    <scope>NUCLEOTIDE SEQUENCE [LARGE SCALE GENOMIC DNA]</scope>
    <source>
        <strain>DSM 13744 / JCM 10971 / SI</strain>
    </source>
</reference>
<sequence length="365" mass="40684">MEKTKVVVAMSGGVDSSVTAALLLEQGFEVIGITMQIWNPGEEAESKGERTCCSLTAIDDARRVADKLGISHYVLNFRSIFEEKVIDYFTSEYLRGRTPNPCIACNRYVKFEALLDRALSIGAEYIATGHYARLGYSGEYGRYTVRRPVDRRKDQTYVLYGMTQRQIARTMMPLGNYTKGQVRKIAEDFGLPVAGKAESQEICFILDDDYRRFLREKAAGIKPGPFLNMKGEVIGRHNGIPFYTVGQRRGLGLAAGERLYVVKIDPENNAITLGPEEAVWGRSLIAADVNLILYESLEEPLEVEAQVRYNARTSPATLVPLPEGRVGVHFHTPQRSITPGQAVVFYRGDYLIGGATIESTGDFFR</sequence>
<comment type="function">
    <text evidence="1">Catalyzes the 2-thiolation of uridine at the wobble position (U34) of tRNA, leading to the formation of s(2)U34.</text>
</comment>
<comment type="catalytic activity">
    <reaction evidence="1">
        <text>S-sulfanyl-L-cysteinyl-[protein] + uridine(34) in tRNA + AH2 + ATP = 2-thiouridine(34) in tRNA + L-cysteinyl-[protein] + A + AMP + diphosphate + H(+)</text>
        <dbReference type="Rhea" id="RHEA:47032"/>
        <dbReference type="Rhea" id="RHEA-COMP:10131"/>
        <dbReference type="Rhea" id="RHEA-COMP:11726"/>
        <dbReference type="Rhea" id="RHEA-COMP:11727"/>
        <dbReference type="Rhea" id="RHEA-COMP:11728"/>
        <dbReference type="ChEBI" id="CHEBI:13193"/>
        <dbReference type="ChEBI" id="CHEBI:15378"/>
        <dbReference type="ChEBI" id="CHEBI:17499"/>
        <dbReference type="ChEBI" id="CHEBI:29950"/>
        <dbReference type="ChEBI" id="CHEBI:30616"/>
        <dbReference type="ChEBI" id="CHEBI:33019"/>
        <dbReference type="ChEBI" id="CHEBI:61963"/>
        <dbReference type="ChEBI" id="CHEBI:65315"/>
        <dbReference type="ChEBI" id="CHEBI:87170"/>
        <dbReference type="ChEBI" id="CHEBI:456215"/>
        <dbReference type="EC" id="2.8.1.13"/>
    </reaction>
</comment>
<comment type="subcellular location">
    <subcellularLocation>
        <location evidence="1">Cytoplasm</location>
    </subcellularLocation>
</comment>
<comment type="similarity">
    <text evidence="1">Belongs to the MnmA/TRMU family.</text>
</comment>
<organism>
    <name type="scientific">Pelotomaculum thermopropionicum (strain DSM 13744 / JCM 10971 / SI)</name>
    <dbReference type="NCBI Taxonomy" id="370438"/>
    <lineage>
        <taxon>Bacteria</taxon>
        <taxon>Bacillati</taxon>
        <taxon>Bacillota</taxon>
        <taxon>Clostridia</taxon>
        <taxon>Eubacteriales</taxon>
        <taxon>Desulfotomaculaceae</taxon>
        <taxon>Pelotomaculum</taxon>
    </lineage>
</organism>
<gene>
    <name evidence="1" type="primary">mnmA</name>
    <name type="ordered locus">PTH_1056</name>
</gene>
<accession>A5D3F0</accession>
<feature type="chain" id="PRO_0000349734" description="tRNA-specific 2-thiouridylase MnmA">
    <location>
        <begin position="1"/>
        <end position="365"/>
    </location>
</feature>
<feature type="region of interest" description="Interaction with tRNA" evidence="1">
    <location>
        <begin position="153"/>
        <end position="155"/>
    </location>
</feature>
<feature type="region of interest" description="Interaction with tRNA" evidence="1">
    <location>
        <begin position="308"/>
        <end position="309"/>
    </location>
</feature>
<feature type="active site" description="Nucleophile" evidence="1">
    <location>
        <position position="105"/>
    </location>
</feature>
<feature type="active site" description="Cysteine persulfide intermediate" evidence="1">
    <location>
        <position position="203"/>
    </location>
</feature>
<feature type="binding site" evidence="1">
    <location>
        <begin position="9"/>
        <end position="16"/>
    </location>
    <ligand>
        <name>ATP</name>
        <dbReference type="ChEBI" id="CHEBI:30616"/>
    </ligand>
</feature>
<feature type="binding site" evidence="1">
    <location>
        <position position="35"/>
    </location>
    <ligand>
        <name>ATP</name>
        <dbReference type="ChEBI" id="CHEBI:30616"/>
    </ligand>
</feature>
<feature type="binding site" evidence="1">
    <location>
        <position position="129"/>
    </location>
    <ligand>
        <name>ATP</name>
        <dbReference type="ChEBI" id="CHEBI:30616"/>
    </ligand>
</feature>
<feature type="site" description="Interaction with tRNA" evidence="1">
    <location>
        <position position="130"/>
    </location>
</feature>
<feature type="site" description="Interaction with tRNA" evidence="1">
    <location>
        <position position="341"/>
    </location>
</feature>
<feature type="disulfide bond" description="Alternate" evidence="1">
    <location>
        <begin position="105"/>
        <end position="203"/>
    </location>
</feature>
<proteinExistence type="inferred from homology"/>
<name>MNMA_PELTS</name>
<protein>
    <recommendedName>
        <fullName evidence="1">tRNA-specific 2-thiouridylase MnmA</fullName>
        <ecNumber evidence="1">2.8.1.13</ecNumber>
    </recommendedName>
</protein>
<keyword id="KW-0067">ATP-binding</keyword>
<keyword id="KW-0963">Cytoplasm</keyword>
<keyword id="KW-1015">Disulfide bond</keyword>
<keyword id="KW-0547">Nucleotide-binding</keyword>
<keyword id="KW-1185">Reference proteome</keyword>
<keyword id="KW-0694">RNA-binding</keyword>
<keyword id="KW-0808">Transferase</keyword>
<keyword id="KW-0819">tRNA processing</keyword>
<keyword id="KW-0820">tRNA-binding</keyword>
<evidence type="ECO:0000255" key="1">
    <source>
        <dbReference type="HAMAP-Rule" id="MF_00144"/>
    </source>
</evidence>
<dbReference type="EC" id="2.8.1.13" evidence="1"/>
<dbReference type="EMBL" id="AP009389">
    <property type="protein sequence ID" value="BAF59237.1"/>
    <property type="molecule type" value="Genomic_DNA"/>
</dbReference>
<dbReference type="SMR" id="A5D3F0"/>
<dbReference type="STRING" id="370438.PTH_1056"/>
<dbReference type="KEGG" id="pth:PTH_1056"/>
<dbReference type="eggNOG" id="COG0482">
    <property type="taxonomic scope" value="Bacteria"/>
</dbReference>
<dbReference type="HOGENOM" id="CLU_035188_0_0_9"/>
<dbReference type="Proteomes" id="UP000006556">
    <property type="component" value="Chromosome"/>
</dbReference>
<dbReference type="GO" id="GO:0005737">
    <property type="term" value="C:cytoplasm"/>
    <property type="evidence" value="ECO:0007669"/>
    <property type="project" value="UniProtKB-SubCell"/>
</dbReference>
<dbReference type="GO" id="GO:0005524">
    <property type="term" value="F:ATP binding"/>
    <property type="evidence" value="ECO:0007669"/>
    <property type="project" value="UniProtKB-KW"/>
</dbReference>
<dbReference type="GO" id="GO:0000049">
    <property type="term" value="F:tRNA binding"/>
    <property type="evidence" value="ECO:0007669"/>
    <property type="project" value="UniProtKB-KW"/>
</dbReference>
<dbReference type="GO" id="GO:0103016">
    <property type="term" value="F:tRNA-uridine 2-sulfurtransferase activity"/>
    <property type="evidence" value="ECO:0007669"/>
    <property type="project" value="UniProtKB-EC"/>
</dbReference>
<dbReference type="GO" id="GO:0002143">
    <property type="term" value="P:tRNA wobble position uridine thiolation"/>
    <property type="evidence" value="ECO:0007669"/>
    <property type="project" value="TreeGrafter"/>
</dbReference>
<dbReference type="CDD" id="cd01998">
    <property type="entry name" value="MnmA_TRMU-like"/>
    <property type="match status" value="1"/>
</dbReference>
<dbReference type="FunFam" id="2.30.30.280:FF:000001">
    <property type="entry name" value="tRNA-specific 2-thiouridylase MnmA"/>
    <property type="match status" value="1"/>
</dbReference>
<dbReference type="FunFam" id="3.40.50.620:FF:000115">
    <property type="entry name" value="tRNA-specific 2-thiouridylase MnmA"/>
    <property type="match status" value="1"/>
</dbReference>
<dbReference type="Gene3D" id="2.30.30.280">
    <property type="entry name" value="Adenine nucleotide alpha hydrolases-like domains"/>
    <property type="match status" value="1"/>
</dbReference>
<dbReference type="Gene3D" id="3.40.50.620">
    <property type="entry name" value="HUPs"/>
    <property type="match status" value="1"/>
</dbReference>
<dbReference type="Gene3D" id="2.40.30.10">
    <property type="entry name" value="Translation factors"/>
    <property type="match status" value="1"/>
</dbReference>
<dbReference type="HAMAP" id="MF_00144">
    <property type="entry name" value="tRNA_thiouridyl_MnmA"/>
    <property type="match status" value="1"/>
</dbReference>
<dbReference type="InterPro" id="IPR004506">
    <property type="entry name" value="MnmA-like"/>
</dbReference>
<dbReference type="InterPro" id="IPR046885">
    <property type="entry name" value="MnmA-like_C"/>
</dbReference>
<dbReference type="InterPro" id="IPR046884">
    <property type="entry name" value="MnmA-like_central"/>
</dbReference>
<dbReference type="InterPro" id="IPR023382">
    <property type="entry name" value="MnmA-like_central_sf"/>
</dbReference>
<dbReference type="InterPro" id="IPR014729">
    <property type="entry name" value="Rossmann-like_a/b/a_fold"/>
</dbReference>
<dbReference type="NCBIfam" id="NF001138">
    <property type="entry name" value="PRK00143.1"/>
    <property type="match status" value="1"/>
</dbReference>
<dbReference type="NCBIfam" id="TIGR00420">
    <property type="entry name" value="trmU"/>
    <property type="match status" value="1"/>
</dbReference>
<dbReference type="PANTHER" id="PTHR11933:SF5">
    <property type="entry name" value="MITOCHONDRIAL TRNA-SPECIFIC 2-THIOURIDYLASE 1"/>
    <property type="match status" value="1"/>
</dbReference>
<dbReference type="PANTHER" id="PTHR11933">
    <property type="entry name" value="TRNA 5-METHYLAMINOMETHYL-2-THIOURIDYLATE -METHYLTRANSFERASE"/>
    <property type="match status" value="1"/>
</dbReference>
<dbReference type="Pfam" id="PF03054">
    <property type="entry name" value="tRNA_Me_trans"/>
    <property type="match status" value="1"/>
</dbReference>
<dbReference type="Pfam" id="PF20258">
    <property type="entry name" value="tRNA_Me_trans_C"/>
    <property type="match status" value="1"/>
</dbReference>
<dbReference type="Pfam" id="PF20259">
    <property type="entry name" value="tRNA_Me_trans_M"/>
    <property type="match status" value="1"/>
</dbReference>
<dbReference type="SUPFAM" id="SSF52402">
    <property type="entry name" value="Adenine nucleotide alpha hydrolases-like"/>
    <property type="match status" value="1"/>
</dbReference>